<reference key="1">
    <citation type="submission" date="2001-12" db="EMBL/GenBank/DDBJ databases">
        <title>NF-E2 inducible megakaryocyte specific novel gene.</title>
        <authorList>
            <person name="Nagata Y."/>
            <person name="Oda M."/>
            <person name="Haruta H."/>
            <person name="Todokoro K."/>
        </authorList>
    </citation>
    <scope>NUCLEOTIDE SEQUENCE [MRNA] (ISOFORM 1)</scope>
</reference>
<reference key="2">
    <citation type="journal article" date="2005" name="Science">
        <title>The transcriptional landscape of the mammalian genome.</title>
        <authorList>
            <person name="Carninci P."/>
            <person name="Kasukawa T."/>
            <person name="Katayama S."/>
            <person name="Gough J."/>
            <person name="Frith M.C."/>
            <person name="Maeda N."/>
            <person name="Oyama R."/>
            <person name="Ravasi T."/>
            <person name="Lenhard B."/>
            <person name="Wells C."/>
            <person name="Kodzius R."/>
            <person name="Shimokawa K."/>
            <person name="Bajic V.B."/>
            <person name="Brenner S.E."/>
            <person name="Batalov S."/>
            <person name="Forrest A.R."/>
            <person name="Zavolan M."/>
            <person name="Davis M.J."/>
            <person name="Wilming L.G."/>
            <person name="Aidinis V."/>
            <person name="Allen J.E."/>
            <person name="Ambesi-Impiombato A."/>
            <person name="Apweiler R."/>
            <person name="Aturaliya R.N."/>
            <person name="Bailey T.L."/>
            <person name="Bansal M."/>
            <person name="Baxter L."/>
            <person name="Beisel K.W."/>
            <person name="Bersano T."/>
            <person name="Bono H."/>
            <person name="Chalk A.M."/>
            <person name="Chiu K.P."/>
            <person name="Choudhary V."/>
            <person name="Christoffels A."/>
            <person name="Clutterbuck D.R."/>
            <person name="Crowe M.L."/>
            <person name="Dalla E."/>
            <person name="Dalrymple B.P."/>
            <person name="de Bono B."/>
            <person name="Della Gatta G."/>
            <person name="di Bernardo D."/>
            <person name="Down T."/>
            <person name="Engstrom P."/>
            <person name="Fagiolini M."/>
            <person name="Faulkner G."/>
            <person name="Fletcher C.F."/>
            <person name="Fukushima T."/>
            <person name="Furuno M."/>
            <person name="Futaki S."/>
            <person name="Gariboldi M."/>
            <person name="Georgii-Hemming P."/>
            <person name="Gingeras T.R."/>
            <person name="Gojobori T."/>
            <person name="Green R.E."/>
            <person name="Gustincich S."/>
            <person name="Harbers M."/>
            <person name="Hayashi Y."/>
            <person name="Hensch T.K."/>
            <person name="Hirokawa N."/>
            <person name="Hill D."/>
            <person name="Huminiecki L."/>
            <person name="Iacono M."/>
            <person name="Ikeo K."/>
            <person name="Iwama A."/>
            <person name="Ishikawa T."/>
            <person name="Jakt M."/>
            <person name="Kanapin A."/>
            <person name="Katoh M."/>
            <person name="Kawasawa Y."/>
            <person name="Kelso J."/>
            <person name="Kitamura H."/>
            <person name="Kitano H."/>
            <person name="Kollias G."/>
            <person name="Krishnan S.P."/>
            <person name="Kruger A."/>
            <person name="Kummerfeld S.K."/>
            <person name="Kurochkin I.V."/>
            <person name="Lareau L.F."/>
            <person name="Lazarevic D."/>
            <person name="Lipovich L."/>
            <person name="Liu J."/>
            <person name="Liuni S."/>
            <person name="McWilliam S."/>
            <person name="Madan Babu M."/>
            <person name="Madera M."/>
            <person name="Marchionni L."/>
            <person name="Matsuda H."/>
            <person name="Matsuzawa S."/>
            <person name="Miki H."/>
            <person name="Mignone F."/>
            <person name="Miyake S."/>
            <person name="Morris K."/>
            <person name="Mottagui-Tabar S."/>
            <person name="Mulder N."/>
            <person name="Nakano N."/>
            <person name="Nakauchi H."/>
            <person name="Ng P."/>
            <person name="Nilsson R."/>
            <person name="Nishiguchi S."/>
            <person name="Nishikawa S."/>
            <person name="Nori F."/>
            <person name="Ohara O."/>
            <person name="Okazaki Y."/>
            <person name="Orlando V."/>
            <person name="Pang K.C."/>
            <person name="Pavan W.J."/>
            <person name="Pavesi G."/>
            <person name="Pesole G."/>
            <person name="Petrovsky N."/>
            <person name="Piazza S."/>
            <person name="Reed J."/>
            <person name="Reid J.F."/>
            <person name="Ring B.Z."/>
            <person name="Ringwald M."/>
            <person name="Rost B."/>
            <person name="Ruan Y."/>
            <person name="Salzberg S.L."/>
            <person name="Sandelin A."/>
            <person name="Schneider C."/>
            <person name="Schoenbach C."/>
            <person name="Sekiguchi K."/>
            <person name="Semple C.A."/>
            <person name="Seno S."/>
            <person name="Sessa L."/>
            <person name="Sheng Y."/>
            <person name="Shibata Y."/>
            <person name="Shimada H."/>
            <person name="Shimada K."/>
            <person name="Silva D."/>
            <person name="Sinclair B."/>
            <person name="Sperling S."/>
            <person name="Stupka E."/>
            <person name="Sugiura K."/>
            <person name="Sultana R."/>
            <person name="Takenaka Y."/>
            <person name="Taki K."/>
            <person name="Tammoja K."/>
            <person name="Tan S.L."/>
            <person name="Tang S."/>
            <person name="Taylor M.S."/>
            <person name="Tegner J."/>
            <person name="Teichmann S.A."/>
            <person name="Ueda H.R."/>
            <person name="van Nimwegen E."/>
            <person name="Verardo R."/>
            <person name="Wei C.L."/>
            <person name="Yagi K."/>
            <person name="Yamanishi H."/>
            <person name="Zabarovsky E."/>
            <person name="Zhu S."/>
            <person name="Zimmer A."/>
            <person name="Hide W."/>
            <person name="Bult C."/>
            <person name="Grimmond S.M."/>
            <person name="Teasdale R.D."/>
            <person name="Liu E.T."/>
            <person name="Brusic V."/>
            <person name="Quackenbush J."/>
            <person name="Wahlestedt C."/>
            <person name="Mattick J.S."/>
            <person name="Hume D.A."/>
            <person name="Kai C."/>
            <person name="Sasaki D."/>
            <person name="Tomaru Y."/>
            <person name="Fukuda S."/>
            <person name="Kanamori-Katayama M."/>
            <person name="Suzuki M."/>
            <person name="Aoki J."/>
            <person name="Arakawa T."/>
            <person name="Iida J."/>
            <person name="Imamura K."/>
            <person name="Itoh M."/>
            <person name="Kato T."/>
            <person name="Kawaji H."/>
            <person name="Kawagashira N."/>
            <person name="Kawashima T."/>
            <person name="Kojima M."/>
            <person name="Kondo S."/>
            <person name="Konno H."/>
            <person name="Nakano K."/>
            <person name="Ninomiya N."/>
            <person name="Nishio T."/>
            <person name="Okada M."/>
            <person name="Plessy C."/>
            <person name="Shibata K."/>
            <person name="Shiraki T."/>
            <person name="Suzuki S."/>
            <person name="Tagami M."/>
            <person name="Waki K."/>
            <person name="Watahiki A."/>
            <person name="Okamura-Oho Y."/>
            <person name="Suzuki H."/>
            <person name="Kawai J."/>
            <person name="Hayashizaki Y."/>
        </authorList>
    </citation>
    <scope>NUCLEOTIDE SEQUENCE [LARGE SCALE MRNA] (ISOFORMS 1 AND 2)</scope>
    <source>
        <strain>C57BL/6J</strain>
        <strain>NOD</strain>
        <tissue>Thymus</tissue>
        <tissue>Vagina</tissue>
    </source>
</reference>
<reference key="3">
    <citation type="journal article" date="2004" name="Genome Res.">
        <title>The status, quality, and expansion of the NIH full-length cDNA project: the Mammalian Gene Collection (MGC).</title>
        <authorList>
            <consortium name="The MGC Project Team"/>
        </authorList>
    </citation>
    <scope>NUCLEOTIDE SEQUENCE [LARGE SCALE MRNA] (ISOFORMS 1; 2 AND 3)</scope>
    <source>
        <strain>C57BL/6J</strain>
        <strain>Czech II</strain>
        <strain>FVB/N</strain>
        <tissue>Brain</tissue>
        <tissue>Mammary tumor</tissue>
    </source>
</reference>
<reference key="4">
    <citation type="journal article" date="2007" name="Proc. Natl. Acad. Sci. U.S.A.">
        <title>Large-scale phosphorylation analysis of mouse liver.</title>
        <authorList>
            <person name="Villen J."/>
            <person name="Beausoleil S.A."/>
            <person name="Gerber S.A."/>
            <person name="Gygi S.P."/>
        </authorList>
    </citation>
    <scope>PHOSPHORYLATION [LARGE SCALE ANALYSIS] AT SER-103</scope>
    <scope>IDENTIFICATION BY MASS SPECTROMETRY [LARGE SCALE ANALYSIS]</scope>
    <source>
        <tissue>Liver</tissue>
    </source>
</reference>
<reference key="5">
    <citation type="journal article" date="2009" name="Immunity">
        <title>The phagosomal proteome in interferon-gamma-activated macrophages.</title>
        <authorList>
            <person name="Trost M."/>
            <person name="English L."/>
            <person name="Lemieux S."/>
            <person name="Courcelles M."/>
            <person name="Desjardins M."/>
            <person name="Thibault P."/>
        </authorList>
    </citation>
    <scope>PHOSPHORYLATION [LARGE SCALE ANALYSIS] AT SER-103 AND SER-440</scope>
    <scope>IDENTIFICATION BY MASS SPECTROMETRY [LARGE SCALE ANALYSIS]</scope>
</reference>
<reference key="6">
    <citation type="journal article" date="2010" name="Cell">
        <title>A tissue-specific atlas of mouse protein phosphorylation and expression.</title>
        <authorList>
            <person name="Huttlin E.L."/>
            <person name="Jedrychowski M.P."/>
            <person name="Elias J.E."/>
            <person name="Goswami T."/>
            <person name="Rad R."/>
            <person name="Beausoleil S.A."/>
            <person name="Villen J."/>
            <person name="Haas W."/>
            <person name="Sowa M.E."/>
            <person name="Gygi S.P."/>
        </authorList>
    </citation>
    <scope>PHOSPHORYLATION [LARGE SCALE ANALYSIS] AT SER-103</scope>
    <scope>IDENTIFICATION BY MASS SPECTROMETRY [LARGE SCALE ANALYSIS]</scope>
    <source>
        <tissue>Brain</tissue>
        <tissue>Brown adipose tissue</tissue>
        <tissue>Heart</tissue>
        <tissue>Kidney</tissue>
        <tissue>Liver</tissue>
        <tissue>Lung</tissue>
        <tissue>Pancreas</tissue>
        <tissue>Spleen</tissue>
    </source>
</reference>
<accession>Q76LS9</accession>
<accession>Q3TEF4</accession>
<accession>Q52KE4</accession>
<accession>Q566I9</accession>
<accession>Q6PES4</accession>
<accession>Q80V14</accession>
<accession>Q8CB41</accession>
<accession>Q8CHR2</accession>
<proteinExistence type="evidence at protein level"/>
<protein>
    <recommendedName>
        <fullName>Ubiquitin carboxyl-terminal hydrolase MINDY-1</fullName>
        <ecNumber>3.4.19.12</ecNumber>
    </recommendedName>
    <alternativeName>
        <fullName>Deubiquitinating enzyme MINDY-1</fullName>
    </alternativeName>
    <alternativeName>
        <fullName>NF-E2 inducible protein</fullName>
    </alternativeName>
    <alternativeName>
        <fullName>Protein FAM63A</fullName>
    </alternativeName>
</protein>
<sequence length="468" mass="51226">MEQPQTENPAPSKATSAETVESENHEALSGPEKHPQDKDGADADGAAGEQEPGDQTLPPAQDGENLECPPPEASSSPPGPACGTSPKVETAEVCSRPQELPQSPRIQQPELDFYCVKWIPWKGERTPIITQSTNGPCPLLAIMNILFLQWKVKLPPQKEVITSDELLTHLGNCLLSIKPQEKSEGLQLNFQQNVDDAMTVLPKLATGLDVNVRFTGVSDFEYTPECSIFDLLGIPLYHGWLVDPQSPEAVSAVGKLSYNQLVEKIITCKHSSDSNLVTEGLVAEQFLETTAAQLTYHGLCELTAAATEDELSVFFRNNHFSTMTKHKSHLYLLVTDQGFLQEEQVVWESLHNVDGDSCFCDSDFHLSHSLGKSHGAEGGGGSPEKQLQVDQDYLIALSLQQQQQPQGTLGLSDLELAQQLQQEEYQQQQAVQPVRTRAPSPQGRGATSGRPAGERRQRSKTESDCVLL</sequence>
<organism>
    <name type="scientific">Mus musculus</name>
    <name type="common">Mouse</name>
    <dbReference type="NCBI Taxonomy" id="10090"/>
    <lineage>
        <taxon>Eukaryota</taxon>
        <taxon>Metazoa</taxon>
        <taxon>Chordata</taxon>
        <taxon>Craniata</taxon>
        <taxon>Vertebrata</taxon>
        <taxon>Euteleostomi</taxon>
        <taxon>Mammalia</taxon>
        <taxon>Eutheria</taxon>
        <taxon>Euarchontoglires</taxon>
        <taxon>Glires</taxon>
        <taxon>Rodentia</taxon>
        <taxon>Myomorpha</taxon>
        <taxon>Muroidea</taxon>
        <taxon>Muridae</taxon>
        <taxon>Murinae</taxon>
        <taxon>Mus</taxon>
        <taxon>Mus</taxon>
    </lineage>
</organism>
<name>MINY1_MOUSE</name>
<dbReference type="EC" id="3.4.19.12"/>
<dbReference type="EMBL" id="AB075603">
    <property type="protein sequence ID" value="BAD06451.1"/>
    <property type="molecule type" value="mRNA"/>
</dbReference>
<dbReference type="EMBL" id="AK036838">
    <property type="protein sequence ID" value="BAC29601.1"/>
    <property type="molecule type" value="mRNA"/>
</dbReference>
<dbReference type="EMBL" id="AK169673">
    <property type="protein sequence ID" value="BAE41294.1"/>
    <property type="molecule type" value="mRNA"/>
</dbReference>
<dbReference type="EMBL" id="BC039762">
    <property type="protein sequence ID" value="AAH39762.1"/>
    <property type="status" value="ALT_SEQ"/>
    <property type="molecule type" value="mRNA"/>
</dbReference>
<dbReference type="EMBL" id="BC051048">
    <property type="protein sequence ID" value="AAH51048.1"/>
    <property type="molecule type" value="mRNA"/>
</dbReference>
<dbReference type="EMBL" id="BC057901">
    <property type="protein sequence ID" value="AAH57901.1"/>
    <property type="molecule type" value="mRNA"/>
</dbReference>
<dbReference type="EMBL" id="BC093521">
    <property type="protein sequence ID" value="AAH93521.1"/>
    <property type="molecule type" value="mRNA"/>
</dbReference>
<dbReference type="EMBL" id="BC094388">
    <property type="protein sequence ID" value="AAH94388.1"/>
    <property type="molecule type" value="mRNA"/>
</dbReference>
<dbReference type="EMBL" id="BC132301">
    <property type="protein sequence ID" value="AAI32302.1"/>
    <property type="molecule type" value="mRNA"/>
</dbReference>
<dbReference type="CCDS" id="CCDS17611.1">
    <molecule id="Q76LS9-2"/>
</dbReference>
<dbReference type="CCDS" id="CCDS57233.1">
    <molecule id="Q76LS9-1"/>
</dbReference>
<dbReference type="RefSeq" id="NP_598619.2">
    <molecule id="Q76LS9-2"/>
    <property type="nucleotide sequence ID" value="NM_133858.4"/>
</dbReference>
<dbReference type="RefSeq" id="NP_955769.1">
    <molecule id="Q76LS9-1"/>
    <property type="nucleotide sequence ID" value="NM_199475.1"/>
</dbReference>
<dbReference type="RefSeq" id="XP_006502282.1">
    <molecule id="Q76LS9-1"/>
    <property type="nucleotide sequence ID" value="XM_006502219.4"/>
</dbReference>
<dbReference type="RefSeq" id="XP_017175267.1">
    <property type="nucleotide sequence ID" value="XM_017319778.1"/>
</dbReference>
<dbReference type="RefSeq" id="XP_036019260.1">
    <molecule id="Q76LS9-1"/>
    <property type="nucleotide sequence ID" value="XM_036163367.1"/>
</dbReference>
<dbReference type="SMR" id="Q76LS9"/>
<dbReference type="BioGRID" id="217146">
    <property type="interactions" value="1"/>
</dbReference>
<dbReference type="FunCoup" id="Q76LS9">
    <property type="interactions" value="1300"/>
</dbReference>
<dbReference type="STRING" id="10090.ENSMUSP00000102805"/>
<dbReference type="iPTMnet" id="Q76LS9"/>
<dbReference type="PhosphoSitePlus" id="Q76LS9"/>
<dbReference type="SwissPalm" id="Q76LS9"/>
<dbReference type="jPOST" id="Q76LS9"/>
<dbReference type="PaxDb" id="10090-ENSMUSP00000102805"/>
<dbReference type="PeptideAtlas" id="Q76LS9"/>
<dbReference type="ProteomicsDB" id="290245">
    <molecule id="Q76LS9-1"/>
</dbReference>
<dbReference type="ProteomicsDB" id="290246">
    <molecule id="Q76LS9-2"/>
</dbReference>
<dbReference type="ProteomicsDB" id="290247">
    <molecule id="Q76LS9-3"/>
</dbReference>
<dbReference type="Pumba" id="Q76LS9"/>
<dbReference type="Antibodypedia" id="34043">
    <property type="antibodies" value="87 antibodies from 14 providers"/>
</dbReference>
<dbReference type="DNASU" id="75007"/>
<dbReference type="Ensembl" id="ENSMUST00000039537.14">
    <molecule id="Q76LS9-2"/>
    <property type="protein sequence ID" value="ENSMUSP00000043910.8"/>
    <property type="gene ID" value="ENSMUSG00000038712.17"/>
</dbReference>
<dbReference type="Ensembl" id="ENSMUST00000107187.9">
    <molecule id="Q76LS9-1"/>
    <property type="protein sequence ID" value="ENSMUSP00000102805.3"/>
    <property type="gene ID" value="ENSMUSG00000038712.17"/>
</dbReference>
<dbReference type="Ensembl" id="ENSMUST00000168223.2">
    <molecule id="Q76LS9-2"/>
    <property type="protein sequence ID" value="ENSMUSP00000127839.2"/>
    <property type="gene ID" value="ENSMUSG00000038712.17"/>
</dbReference>
<dbReference type="GeneID" id="75007"/>
<dbReference type="KEGG" id="mmu:75007"/>
<dbReference type="UCSC" id="uc008qjd.2">
    <molecule id="Q76LS9-2"/>
    <property type="organism name" value="mouse"/>
</dbReference>
<dbReference type="UCSC" id="uc008qje.2">
    <molecule id="Q76LS9-1"/>
    <property type="organism name" value="mouse"/>
</dbReference>
<dbReference type="UCSC" id="uc008qjf.2">
    <molecule id="Q76LS9-3"/>
    <property type="organism name" value="mouse"/>
</dbReference>
<dbReference type="AGR" id="MGI:1922257"/>
<dbReference type="CTD" id="55793"/>
<dbReference type="MGI" id="MGI:1922257">
    <property type="gene designation" value="Mindy1"/>
</dbReference>
<dbReference type="VEuPathDB" id="HostDB:ENSMUSG00000038712"/>
<dbReference type="eggNOG" id="KOG2427">
    <property type="taxonomic scope" value="Eukaryota"/>
</dbReference>
<dbReference type="GeneTree" id="ENSGT00390000016607"/>
<dbReference type="HOGENOM" id="CLU_022566_5_1_1"/>
<dbReference type="InParanoid" id="Q76LS9"/>
<dbReference type="OMA" id="HTRFSNE"/>
<dbReference type="OrthoDB" id="10261212at2759"/>
<dbReference type="PhylomeDB" id="Q76LS9"/>
<dbReference type="TreeFam" id="TF314589"/>
<dbReference type="BioGRID-ORCS" id="75007">
    <property type="hits" value="2 hits in 77 CRISPR screens"/>
</dbReference>
<dbReference type="ChiTaRS" id="Fam63a">
    <property type="organism name" value="mouse"/>
</dbReference>
<dbReference type="PRO" id="PR:Q76LS9"/>
<dbReference type="Proteomes" id="UP000000589">
    <property type="component" value="Chromosome 3"/>
</dbReference>
<dbReference type="RNAct" id="Q76LS9">
    <property type="molecule type" value="protein"/>
</dbReference>
<dbReference type="Bgee" id="ENSMUSG00000038712">
    <property type="expression patterns" value="Expressed in primary oocyte and 254 other cell types or tissues"/>
</dbReference>
<dbReference type="ExpressionAtlas" id="Q76LS9">
    <property type="expression patterns" value="baseline and differential"/>
</dbReference>
<dbReference type="GO" id="GO:0016604">
    <property type="term" value="C:nuclear body"/>
    <property type="evidence" value="ECO:0007669"/>
    <property type="project" value="Ensembl"/>
</dbReference>
<dbReference type="GO" id="GO:0016807">
    <property type="term" value="F:cysteine-type carboxypeptidase activity"/>
    <property type="evidence" value="ECO:0007669"/>
    <property type="project" value="Ensembl"/>
</dbReference>
<dbReference type="GO" id="GO:0004843">
    <property type="term" value="F:cysteine-type deubiquitinase activity"/>
    <property type="evidence" value="ECO:0007669"/>
    <property type="project" value="UniProtKB-EC"/>
</dbReference>
<dbReference type="GO" id="GO:1990380">
    <property type="term" value="F:K48-linked deubiquitinase activity"/>
    <property type="evidence" value="ECO:0007669"/>
    <property type="project" value="Ensembl"/>
</dbReference>
<dbReference type="GO" id="GO:0036435">
    <property type="term" value="F:K48-linked polyubiquitin modification-dependent protein binding"/>
    <property type="evidence" value="ECO:0000250"/>
    <property type="project" value="UniProtKB"/>
</dbReference>
<dbReference type="GO" id="GO:0006508">
    <property type="term" value="P:proteolysis"/>
    <property type="evidence" value="ECO:0007669"/>
    <property type="project" value="UniProtKB-KW"/>
</dbReference>
<dbReference type="InterPro" id="IPR007518">
    <property type="entry name" value="MINDY"/>
</dbReference>
<dbReference type="InterPro" id="IPR033979">
    <property type="entry name" value="MINDY_domain"/>
</dbReference>
<dbReference type="PANTHER" id="PTHR18063">
    <property type="entry name" value="NF-E2 INDUCIBLE PROTEIN"/>
    <property type="match status" value="1"/>
</dbReference>
<dbReference type="PANTHER" id="PTHR18063:SF7">
    <property type="entry name" value="UBIQUITIN CARBOXYL-TERMINAL HYDROLASE MINDY-1"/>
    <property type="match status" value="1"/>
</dbReference>
<dbReference type="Pfam" id="PF04424">
    <property type="entry name" value="MINDY_DUB"/>
    <property type="match status" value="1"/>
</dbReference>
<comment type="function">
    <text evidence="1">Hydrolase that can specifically remove 'Lys-48'-linked conjugated ubiquitin from proteins. Has exodeubiquitinase activity and has a preference for long polyubiquitin chains. May play a regulatory role at the level of protein turnover.</text>
</comment>
<comment type="catalytic activity">
    <reaction evidence="1">
        <text>Thiol-dependent hydrolysis of ester, thioester, amide, peptide and isopeptide bonds formed by the C-terminal Gly of ubiquitin (a 76-residue protein attached to proteins as an intracellular targeting signal).</text>
        <dbReference type="EC" id="3.4.19.12"/>
    </reaction>
</comment>
<comment type="alternative products">
    <event type="alternative splicing"/>
    <isoform>
        <id>Q76LS9-1</id>
        <name>1</name>
        <sequence type="displayed"/>
    </isoform>
    <isoform>
        <id>Q76LS9-2</id>
        <name>2</name>
        <sequence type="described" ref="VSP_034718"/>
    </isoform>
    <isoform>
        <id>Q76LS9-3</id>
        <name>3</name>
        <sequence type="described" ref="VSP_034716 VSP_034717"/>
    </isoform>
</comment>
<comment type="similarity">
    <text evidence="5">Belongs to the MINDY deubiquitinase family. FAM63 subfamily.</text>
</comment>
<comment type="sequence caution" evidence="5">
    <conflict type="miscellaneous discrepancy">
        <sequence resource="EMBL-CDS" id="AAH39762"/>
    </conflict>
    <text>Contaminating sequence. Potential vector sequence.</text>
</comment>
<feature type="chain" id="PRO_0000344038" description="Ubiquitin carboxyl-terminal hydrolase MINDY-1">
    <location>
        <begin position="1"/>
        <end position="468"/>
    </location>
</feature>
<feature type="region of interest" description="Disordered" evidence="2">
    <location>
        <begin position="1"/>
        <end position="105"/>
    </location>
</feature>
<feature type="region of interest" description="Ubiquitin-binding domain (UBD)" evidence="1">
    <location>
        <begin position="388"/>
        <end position="427"/>
    </location>
</feature>
<feature type="region of interest" description="Disordered" evidence="2">
    <location>
        <begin position="423"/>
        <end position="468"/>
    </location>
</feature>
<feature type="compositionally biased region" description="Polar residues" evidence="2">
    <location>
        <begin position="1"/>
        <end position="19"/>
    </location>
</feature>
<feature type="compositionally biased region" description="Basic and acidic residues" evidence="2">
    <location>
        <begin position="22"/>
        <end position="41"/>
    </location>
</feature>
<feature type="compositionally biased region" description="Low complexity" evidence="2">
    <location>
        <begin position="43"/>
        <end position="54"/>
    </location>
</feature>
<feature type="compositionally biased region" description="Pro residues" evidence="2">
    <location>
        <begin position="68"/>
        <end position="80"/>
    </location>
</feature>
<feature type="compositionally biased region" description="Low complexity" evidence="2">
    <location>
        <begin position="423"/>
        <end position="432"/>
    </location>
</feature>
<feature type="compositionally biased region" description="Basic and acidic residues" evidence="2">
    <location>
        <begin position="452"/>
        <end position="468"/>
    </location>
</feature>
<feature type="active site" description="Nucleophile" evidence="1">
    <location>
        <position position="137"/>
    </location>
</feature>
<feature type="active site" description="Proton acceptor" evidence="1">
    <location>
        <position position="319"/>
    </location>
</feature>
<feature type="site" description="Ubiquitin-binding" evidence="1">
    <location>
        <position position="413"/>
    </location>
</feature>
<feature type="site" description="Ubiquitin-binding" evidence="1">
    <location>
        <begin position="416"/>
        <end position="417"/>
    </location>
</feature>
<feature type="site" description="Ubiquitin-binding" evidence="1">
    <location>
        <position position="420"/>
    </location>
</feature>
<feature type="modified residue" description="Phosphoserine" evidence="6 7 8">
    <location>
        <position position="103"/>
    </location>
</feature>
<feature type="modified residue" description="Phosphoserine" evidence="7">
    <location>
        <position position="440"/>
    </location>
</feature>
<feature type="splice variant" id="VSP_034716" description="In isoform 3." evidence="3">
    <location>
        <begin position="1"/>
        <end position="169"/>
    </location>
</feature>
<feature type="splice variant" id="VSP_034717" description="In isoform 3." evidence="3">
    <original>LGNCLLSIKPQEKSEGLQLNFQ</original>
    <variation>MKHGMVGGREGRLDQPSCLFSH</variation>
    <location>
        <begin position="170"/>
        <end position="191"/>
    </location>
</feature>
<feature type="splice variant" id="VSP_034718" description="In isoform 2." evidence="3 4">
    <location>
        <begin position="392"/>
        <end position="400"/>
    </location>
</feature>
<feature type="sequence conflict" description="In Ref. 2; BAE41294." evidence="5" ref="2">
    <original>Q</original>
    <variation>E</variation>
    <location>
        <position position="61"/>
    </location>
</feature>
<feature type="sequence conflict" description="In Ref. 3; AAH94388." evidence="5" ref="3">
    <original>T</original>
    <variation>A</variation>
    <location>
        <position position="324"/>
    </location>
</feature>
<keyword id="KW-0025">Alternative splicing</keyword>
<keyword id="KW-0378">Hydrolase</keyword>
<keyword id="KW-0597">Phosphoprotein</keyword>
<keyword id="KW-0645">Protease</keyword>
<keyword id="KW-1185">Reference proteome</keyword>
<keyword id="KW-0788">Thiol protease</keyword>
<keyword id="KW-0833">Ubl conjugation pathway</keyword>
<gene>
    <name type="primary">Mindy1</name>
    <name type="synonym">Fam63a</name>
    <name type="synonym">Ni</name>
</gene>
<evidence type="ECO:0000250" key="1">
    <source>
        <dbReference type="UniProtKB" id="Q8N5J2"/>
    </source>
</evidence>
<evidence type="ECO:0000256" key="2">
    <source>
        <dbReference type="SAM" id="MobiDB-lite"/>
    </source>
</evidence>
<evidence type="ECO:0000303" key="3">
    <source>
    </source>
</evidence>
<evidence type="ECO:0000303" key="4">
    <source>
    </source>
</evidence>
<evidence type="ECO:0000305" key="5"/>
<evidence type="ECO:0007744" key="6">
    <source>
    </source>
</evidence>
<evidence type="ECO:0007744" key="7">
    <source>
    </source>
</evidence>
<evidence type="ECO:0007744" key="8">
    <source>
    </source>
</evidence>